<feature type="chain" id="PRO_0000239713" description="Acetyl esterase">
    <location>
        <begin position="1"/>
        <end position="319"/>
    </location>
</feature>
<feature type="short sequence motif" description="Involved in the stabilization of the negatively charged intermediate by the formation of the oxyanion hole" evidence="1">
    <location>
        <begin position="91"/>
        <end position="93"/>
    </location>
</feature>
<feature type="active site" evidence="2">
    <location>
        <position position="165"/>
    </location>
</feature>
<feature type="active site" evidence="2">
    <location>
        <position position="262"/>
    </location>
</feature>
<feature type="active site" evidence="2">
    <location>
        <position position="292"/>
    </location>
</feature>
<gene>
    <name evidence="2" type="primary">aes</name>
    <name type="ordered locus">SF0421</name>
    <name type="ordered locus">S0428</name>
</gene>
<name>AES_SHIFL</name>
<organism>
    <name type="scientific">Shigella flexneri</name>
    <dbReference type="NCBI Taxonomy" id="623"/>
    <lineage>
        <taxon>Bacteria</taxon>
        <taxon>Pseudomonadati</taxon>
        <taxon>Pseudomonadota</taxon>
        <taxon>Gammaproteobacteria</taxon>
        <taxon>Enterobacterales</taxon>
        <taxon>Enterobacteriaceae</taxon>
        <taxon>Shigella</taxon>
    </lineage>
</organism>
<sequence length="319" mass="36037">MKPENKLPVLDLISAEMKTVVNTLQPDLPSWPATGTIAEQRQYYTLERRFWNAGAPEMATRAYMVPTKYGQVETRLFCPQPDSPATLFYLHGGGFILGNLDTHDRIMRLLASYSQCTVIGINYTLSPEARFPQAIEEIVAACCYFHQQAEDYQINMSRIGFAGDSAGAMLALASALWLRDKQIDCGKIAGVLLWYGLYGLRDSVTRRLLGGVWDGLTQQDLQMYEEAYLSNDADRESPYYCLFNNDLTREVPPCFIAGAEFDPLLDDSRLLYQTLAAHQQPCEFKLYPGTLHAFLHYSRMMKTADEALRDGAQFFTAQL</sequence>
<dbReference type="EC" id="3.1.1.-" evidence="2"/>
<dbReference type="EMBL" id="AE005674">
    <property type="protein sequence ID" value="AAN42076.1"/>
    <property type="status" value="ALT_SEQ"/>
    <property type="molecule type" value="Genomic_DNA"/>
</dbReference>
<dbReference type="EMBL" id="AE014073">
    <property type="protein sequence ID" value="AAP15953.1"/>
    <property type="status" value="ALT_SEQ"/>
    <property type="molecule type" value="Genomic_DNA"/>
</dbReference>
<dbReference type="RefSeq" id="WP_000801841.1">
    <property type="nucleotide sequence ID" value="NZ_UIPM01000019.1"/>
</dbReference>
<dbReference type="SMR" id="Q83M39"/>
<dbReference type="STRING" id="198214.SF0421"/>
<dbReference type="ESTHER" id="shifl-AES">
    <property type="family name" value="Acetyl_esterase"/>
</dbReference>
<dbReference type="MEROPS" id="S09.A47"/>
<dbReference type="PaxDb" id="198214-SF0421"/>
<dbReference type="KEGG" id="sfl:SF0421"/>
<dbReference type="KEGG" id="sfx:S0428"/>
<dbReference type="PATRIC" id="fig|198214.7.peg.483"/>
<dbReference type="HOGENOM" id="CLU_012494_6_4_6"/>
<dbReference type="Proteomes" id="UP000001006">
    <property type="component" value="Chromosome"/>
</dbReference>
<dbReference type="Proteomes" id="UP000002673">
    <property type="component" value="Chromosome"/>
</dbReference>
<dbReference type="GO" id="GO:0005737">
    <property type="term" value="C:cytoplasm"/>
    <property type="evidence" value="ECO:0007669"/>
    <property type="project" value="UniProtKB-SubCell"/>
</dbReference>
<dbReference type="GO" id="GO:0052689">
    <property type="term" value="F:carboxylic ester hydrolase activity"/>
    <property type="evidence" value="ECO:0007669"/>
    <property type="project" value="UniProtKB-UniRule"/>
</dbReference>
<dbReference type="FunFam" id="3.40.50.1820:FF:000035">
    <property type="entry name" value="Acetyl esterase"/>
    <property type="match status" value="1"/>
</dbReference>
<dbReference type="Gene3D" id="3.40.50.1820">
    <property type="entry name" value="alpha/beta hydrolase"/>
    <property type="match status" value="1"/>
</dbReference>
<dbReference type="HAMAP" id="MF_01958">
    <property type="entry name" value="Acetyl_esterase"/>
    <property type="match status" value="1"/>
</dbReference>
<dbReference type="InterPro" id="IPR013094">
    <property type="entry name" value="AB_hydrolase_3"/>
</dbReference>
<dbReference type="InterPro" id="IPR029058">
    <property type="entry name" value="AB_hydrolase_fold"/>
</dbReference>
<dbReference type="InterPro" id="IPR023508">
    <property type="entry name" value="Acetyl_esterase"/>
</dbReference>
<dbReference type="InterPro" id="IPR050300">
    <property type="entry name" value="GDXG_lipolytic_enzyme"/>
</dbReference>
<dbReference type="InterPro" id="IPR002168">
    <property type="entry name" value="Lipase_GDXG_HIS_AS"/>
</dbReference>
<dbReference type="InterPro" id="IPR033140">
    <property type="entry name" value="Lipase_GDXG_put_SER_AS"/>
</dbReference>
<dbReference type="NCBIfam" id="NF007547">
    <property type="entry name" value="PRK10162.1"/>
    <property type="match status" value="1"/>
</dbReference>
<dbReference type="PANTHER" id="PTHR48081">
    <property type="entry name" value="AB HYDROLASE SUPERFAMILY PROTEIN C4A8.06C"/>
    <property type="match status" value="1"/>
</dbReference>
<dbReference type="PANTHER" id="PTHR48081:SF8">
    <property type="entry name" value="ALPHA_BETA HYDROLASE FOLD-3 DOMAIN-CONTAINING PROTEIN-RELATED"/>
    <property type="match status" value="1"/>
</dbReference>
<dbReference type="Pfam" id="PF07859">
    <property type="entry name" value="Abhydrolase_3"/>
    <property type="match status" value="1"/>
</dbReference>
<dbReference type="SUPFAM" id="SSF53474">
    <property type="entry name" value="alpha/beta-Hydrolases"/>
    <property type="match status" value="1"/>
</dbReference>
<dbReference type="PROSITE" id="PS01173">
    <property type="entry name" value="LIPASE_GDXG_HIS"/>
    <property type="match status" value="1"/>
</dbReference>
<dbReference type="PROSITE" id="PS01174">
    <property type="entry name" value="LIPASE_GDXG_SER"/>
    <property type="match status" value="1"/>
</dbReference>
<evidence type="ECO:0000250" key="1">
    <source>
        <dbReference type="UniProtKB" id="Q5NUF3"/>
    </source>
</evidence>
<evidence type="ECO:0000255" key="2">
    <source>
        <dbReference type="HAMAP-Rule" id="MF_01958"/>
    </source>
</evidence>
<evidence type="ECO:0000305" key="3"/>
<keyword id="KW-0963">Cytoplasm</keyword>
<keyword id="KW-0378">Hydrolase</keyword>
<keyword id="KW-1185">Reference proteome</keyword>
<keyword id="KW-0719">Serine esterase</keyword>
<reference key="1">
    <citation type="journal article" date="2002" name="Nucleic Acids Res.">
        <title>Genome sequence of Shigella flexneri 2a: insights into pathogenicity through comparison with genomes of Escherichia coli K12 and O157.</title>
        <authorList>
            <person name="Jin Q."/>
            <person name="Yuan Z."/>
            <person name="Xu J."/>
            <person name="Wang Y."/>
            <person name="Shen Y."/>
            <person name="Lu W."/>
            <person name="Wang J."/>
            <person name="Liu H."/>
            <person name="Yang J."/>
            <person name="Yang F."/>
            <person name="Zhang X."/>
            <person name="Zhang J."/>
            <person name="Yang G."/>
            <person name="Wu H."/>
            <person name="Qu D."/>
            <person name="Dong J."/>
            <person name="Sun L."/>
            <person name="Xue Y."/>
            <person name="Zhao A."/>
            <person name="Gao Y."/>
            <person name="Zhu J."/>
            <person name="Kan B."/>
            <person name="Ding K."/>
            <person name="Chen S."/>
            <person name="Cheng H."/>
            <person name="Yao Z."/>
            <person name="He B."/>
            <person name="Chen R."/>
            <person name="Ma D."/>
            <person name="Qiang B."/>
            <person name="Wen Y."/>
            <person name="Hou Y."/>
            <person name="Yu J."/>
        </authorList>
    </citation>
    <scope>NUCLEOTIDE SEQUENCE [LARGE SCALE GENOMIC DNA]</scope>
    <source>
        <strain>301 / Serotype 2a</strain>
    </source>
</reference>
<reference key="2">
    <citation type="journal article" date="2003" name="Infect. Immun.">
        <title>Complete genome sequence and comparative genomics of Shigella flexneri serotype 2a strain 2457T.</title>
        <authorList>
            <person name="Wei J."/>
            <person name="Goldberg M.B."/>
            <person name="Burland V."/>
            <person name="Venkatesan M.M."/>
            <person name="Deng W."/>
            <person name="Fournier G."/>
            <person name="Mayhew G.F."/>
            <person name="Plunkett G. III"/>
            <person name="Rose D.J."/>
            <person name="Darling A."/>
            <person name="Mau B."/>
            <person name="Perna N.T."/>
            <person name="Payne S.M."/>
            <person name="Runyen-Janecky L.J."/>
            <person name="Zhou S."/>
            <person name="Schwartz D.C."/>
            <person name="Blattner F.R."/>
        </authorList>
    </citation>
    <scope>NUCLEOTIDE SEQUENCE [LARGE SCALE GENOMIC DNA]</scope>
    <source>
        <strain>ATCC 700930 / 2457T / Serotype 2a</strain>
    </source>
</reference>
<accession>Q83M39</accession>
<accession>Q7C2W8</accession>
<proteinExistence type="inferred from homology"/>
<comment type="function">
    <text evidence="2">Displays esterase activity towards short chain fatty esters (acyl chain length of up to 8 carbons). Able to hydrolyze triacetylglycerol (triacetin) and tributyrylglycerol (tributyrin), but not trioleylglycerol (triolein) or cholesterol oleate. Negatively regulates MalT activity by antagonizing maltotriose binding. Inhibits MelA galactosidase activity.</text>
</comment>
<comment type="subunit">
    <text evidence="2">Homodimer. Interacts with MalT and MelA.</text>
</comment>
<comment type="subcellular location">
    <subcellularLocation>
        <location evidence="2">Cytoplasm</location>
    </subcellularLocation>
</comment>
<comment type="similarity">
    <text evidence="2">Belongs to the 'GDXG' lipolytic enzyme family.</text>
</comment>
<comment type="sequence caution" evidence="3">
    <conflict type="erroneous termination">
        <sequence resource="EMBL-CDS" id="AAN42076"/>
    </conflict>
    <text>Truncated C-terminus.</text>
</comment>
<comment type="sequence caution" evidence="3">
    <conflict type="erroneous termination">
        <sequence resource="EMBL-CDS" id="AAP15953"/>
    </conflict>
    <text>Truncated C-terminus.</text>
</comment>
<protein>
    <recommendedName>
        <fullName evidence="2">Acetyl esterase</fullName>
        <ecNumber evidence="2">3.1.1.-</ecNumber>
    </recommendedName>
</protein>